<evidence type="ECO:0000255" key="1">
    <source>
        <dbReference type="HAMAP-Rule" id="MF_00543"/>
    </source>
</evidence>
<gene>
    <name evidence="1" type="primary">tpl</name>
    <name type="ordered locus">Intca_0142</name>
</gene>
<feature type="chain" id="PRO_0000408493" description="Tyrosine phenol-lyase">
    <location>
        <begin position="1"/>
        <end position="473"/>
    </location>
</feature>
<feature type="modified residue" description="N6-(pyridoxal phosphate)lysine" evidence="1">
    <location>
        <position position="257"/>
    </location>
</feature>
<keyword id="KW-0456">Lyase</keyword>
<keyword id="KW-0663">Pyridoxal phosphate</keyword>
<keyword id="KW-1185">Reference proteome</keyword>
<dbReference type="EC" id="4.1.99.2" evidence="1"/>
<dbReference type="EMBL" id="CP002343">
    <property type="protein sequence ID" value="ADU46703.1"/>
    <property type="molecule type" value="Genomic_DNA"/>
</dbReference>
<dbReference type="RefSeq" id="WP_013491025.1">
    <property type="nucleotide sequence ID" value="NC_014830.1"/>
</dbReference>
<dbReference type="SMR" id="E6SFG5"/>
<dbReference type="STRING" id="710696.Intca_0142"/>
<dbReference type="KEGG" id="ica:Intca_0142"/>
<dbReference type="eggNOG" id="COG3033">
    <property type="taxonomic scope" value="Bacteria"/>
</dbReference>
<dbReference type="HOGENOM" id="CLU_047223_0_0_11"/>
<dbReference type="OrthoDB" id="9764079at2"/>
<dbReference type="Proteomes" id="UP000008914">
    <property type="component" value="Chromosome"/>
</dbReference>
<dbReference type="GO" id="GO:0050371">
    <property type="term" value="F:tyrosine phenol-lyase activity"/>
    <property type="evidence" value="ECO:0007669"/>
    <property type="project" value="UniProtKB-UniRule"/>
</dbReference>
<dbReference type="GO" id="GO:0006570">
    <property type="term" value="P:tyrosine metabolic process"/>
    <property type="evidence" value="ECO:0007669"/>
    <property type="project" value="InterPro"/>
</dbReference>
<dbReference type="CDD" id="cd00617">
    <property type="entry name" value="Tnase_like"/>
    <property type="match status" value="1"/>
</dbReference>
<dbReference type="Gene3D" id="3.90.1150.10">
    <property type="entry name" value="Aspartate Aminotransferase, domain 1"/>
    <property type="match status" value="1"/>
</dbReference>
<dbReference type="Gene3D" id="3.40.640.10">
    <property type="entry name" value="Type I PLP-dependent aspartate aminotransferase-like (Major domain)"/>
    <property type="match status" value="1"/>
</dbReference>
<dbReference type="HAMAP" id="MF_00543">
    <property type="entry name" value="Tyr_phenol_lyase"/>
    <property type="match status" value="1"/>
</dbReference>
<dbReference type="InterPro" id="IPR001597">
    <property type="entry name" value="ArAA_b-elim_lyase/Thr_aldolase"/>
</dbReference>
<dbReference type="InterPro" id="IPR011166">
    <property type="entry name" value="Beta-eliminating_lyase"/>
</dbReference>
<dbReference type="InterPro" id="IPR015424">
    <property type="entry name" value="PyrdxlP-dep_Trfase"/>
</dbReference>
<dbReference type="InterPro" id="IPR015421">
    <property type="entry name" value="PyrdxlP-dep_Trfase_major"/>
</dbReference>
<dbReference type="InterPro" id="IPR015422">
    <property type="entry name" value="PyrdxlP-dep_Trfase_small"/>
</dbReference>
<dbReference type="InterPro" id="IPR013441">
    <property type="entry name" value="Tyr_phenol_ly"/>
</dbReference>
<dbReference type="NCBIfam" id="NF009709">
    <property type="entry name" value="PRK13238.1"/>
    <property type="match status" value="1"/>
</dbReference>
<dbReference type="NCBIfam" id="TIGR02618">
    <property type="entry name" value="tyr_phenol_ly"/>
    <property type="match status" value="1"/>
</dbReference>
<dbReference type="PANTHER" id="PTHR32325">
    <property type="entry name" value="BETA-ELIMINATING LYASE-LIKE PROTEIN-RELATED"/>
    <property type="match status" value="1"/>
</dbReference>
<dbReference type="PANTHER" id="PTHR32325:SF4">
    <property type="entry name" value="TRYPTOPHANASE"/>
    <property type="match status" value="1"/>
</dbReference>
<dbReference type="Pfam" id="PF01212">
    <property type="entry name" value="Beta_elim_lyase"/>
    <property type="match status" value="1"/>
</dbReference>
<dbReference type="PIRSF" id="PIRSF001386">
    <property type="entry name" value="Trpase"/>
    <property type="match status" value="1"/>
</dbReference>
<dbReference type="SUPFAM" id="SSF53383">
    <property type="entry name" value="PLP-dependent transferases"/>
    <property type="match status" value="1"/>
</dbReference>
<protein>
    <recommendedName>
        <fullName evidence="1">Tyrosine phenol-lyase</fullName>
        <ecNumber evidence="1">4.1.99.2</ecNumber>
    </recommendedName>
    <alternativeName>
        <fullName evidence="1">Beta-tyrosinase</fullName>
    </alternativeName>
</protein>
<sequence>MPAIAEPYRIKMVEPITMTTREQREAAIRAAGYNTFLLRSDDVYIDLLTDSGTSAMSDRQWSAMMMGDEAYAGARSFDHLVESVRENYGFPLVCPTHQGRGAEHLISKILITPGQHVPGNMYFTTTRVHQELAGGTFHDVIIDEAHDPASRHPFKGNVDLDKFQALIDEVGADQIAYINVAVTVNMAGGQPVSMANIRAVREICDRYGIILWSDATRLAENAWFIQEREDGYAGRPVAEIVREMLSHFDGITMSGKKDCLVNIGGFLAMRDEAILTKARELVVVYEGMPTYGGLAGRDLDAMAVGLREALDDDYLTHRIGQVRYLGERLQAAGVPIVEPIGGHAVFIDAAAFLDHLSQDELPAQTLAAEIFLDSGVRSMERGIVSAGRDADGNNRYPKLELVRLTIPRRVYTNSHMDVVADSVIRVFQRRREIQGLTFVYESPTLRFFTSRFEPLAAEAALEEGRPEPALAGA</sequence>
<accession>E6SFG5</accession>
<proteinExistence type="inferred from homology"/>
<reference key="1">
    <citation type="journal article" date="2010" name="Stand. Genomic Sci.">
        <title>Complete genome sequence of Intrasporangium calvum type strain (7 KIP).</title>
        <authorList>
            <person name="Del Rio T.G."/>
            <person name="Chertkov O."/>
            <person name="Yasawong M."/>
            <person name="Lucas S."/>
            <person name="Deshpande S."/>
            <person name="Cheng J.F."/>
            <person name="Detter C."/>
            <person name="Tapia R."/>
            <person name="Han C."/>
            <person name="Goodwin L."/>
            <person name="Pitluck S."/>
            <person name="Liolios K."/>
            <person name="Ivanova N."/>
            <person name="Mavromatis K."/>
            <person name="Pati A."/>
            <person name="Chen A."/>
            <person name="Palaniappan K."/>
            <person name="Land M."/>
            <person name="Hauser L."/>
            <person name="Chang Y.J."/>
            <person name="Jeffries C.D."/>
            <person name="Rohde M."/>
            <person name="Pukall R."/>
            <person name="Sikorski J."/>
            <person name="Goker M."/>
            <person name="Woyke T."/>
            <person name="Bristow J."/>
            <person name="Eisen J.A."/>
            <person name="Markowitz V."/>
            <person name="Hugenholtz P."/>
            <person name="Kyrpides N.C."/>
            <person name="Klenk H.P."/>
            <person name="Lapidus A."/>
        </authorList>
    </citation>
    <scope>NUCLEOTIDE SEQUENCE [LARGE SCALE GENOMIC DNA]</scope>
    <source>
        <strain>ATCC 23552 / DSM 43043 / JCM 3097 / NBRC 12989 / NCIMB 10167 / NRRL B-3866 / 7 KIP</strain>
    </source>
</reference>
<organism>
    <name type="scientific">Intrasporangium calvum (strain ATCC 23552 / DSM 43043 / JCM 3097 / NBRC 12989 / NCIMB 10167 / NRRL B-3866 / 7 KIP)</name>
    <dbReference type="NCBI Taxonomy" id="710696"/>
    <lineage>
        <taxon>Bacteria</taxon>
        <taxon>Bacillati</taxon>
        <taxon>Actinomycetota</taxon>
        <taxon>Actinomycetes</taxon>
        <taxon>Micrococcales</taxon>
        <taxon>Intrasporangiaceae</taxon>
        <taxon>Intrasporangium</taxon>
    </lineage>
</organism>
<comment type="catalytic activity">
    <reaction evidence="1">
        <text>L-tyrosine + H2O = phenol + pyruvate + NH4(+)</text>
        <dbReference type="Rhea" id="RHEA:21704"/>
        <dbReference type="ChEBI" id="CHEBI:15361"/>
        <dbReference type="ChEBI" id="CHEBI:15377"/>
        <dbReference type="ChEBI" id="CHEBI:15882"/>
        <dbReference type="ChEBI" id="CHEBI:28938"/>
        <dbReference type="ChEBI" id="CHEBI:58315"/>
        <dbReference type="EC" id="4.1.99.2"/>
    </reaction>
</comment>
<comment type="cofactor">
    <cofactor evidence="1">
        <name>pyridoxal 5'-phosphate</name>
        <dbReference type="ChEBI" id="CHEBI:597326"/>
    </cofactor>
</comment>
<comment type="subunit">
    <text evidence="1">Homotetramer.</text>
</comment>
<comment type="similarity">
    <text evidence="1">Belongs to the beta-eliminating lyase family.</text>
</comment>
<name>TPL_INTC7</name>